<dbReference type="EMBL" id="FN393082">
    <property type="protein sequence ID" value="CAY81853.1"/>
    <property type="molecule type" value="Genomic_DNA"/>
</dbReference>
<dbReference type="SMR" id="C8ZEN7"/>
<dbReference type="HOGENOM" id="CLU_013228_0_0_1"/>
<dbReference type="OrthoDB" id="24780at4893"/>
<dbReference type="Proteomes" id="UP000000286">
    <property type="component" value="Chromosome XIII, Scaffold EC1118_1M3"/>
</dbReference>
<dbReference type="GO" id="GO:0005886">
    <property type="term" value="C:plasma membrane"/>
    <property type="evidence" value="ECO:0007669"/>
    <property type="project" value="UniProtKB-SubCell"/>
</dbReference>
<dbReference type="GO" id="GO:0070941">
    <property type="term" value="P:eisosome assembly"/>
    <property type="evidence" value="ECO:0007669"/>
    <property type="project" value="TreeGrafter"/>
</dbReference>
<dbReference type="InterPro" id="IPR024527">
    <property type="entry name" value="Eisosome1"/>
</dbReference>
<dbReference type="PANTHER" id="PTHR28298">
    <property type="entry name" value="EISOSOME PROTEIN 1"/>
    <property type="match status" value="1"/>
</dbReference>
<dbReference type="PANTHER" id="PTHR28298:SF1">
    <property type="entry name" value="EISOSOME PROTEIN 1"/>
    <property type="match status" value="1"/>
</dbReference>
<dbReference type="Pfam" id="PF12757">
    <property type="entry name" value="Eisosome1"/>
    <property type="match status" value="1"/>
</dbReference>
<evidence type="ECO:0000250" key="1"/>
<evidence type="ECO:0000250" key="2">
    <source>
        <dbReference type="UniProtKB" id="Q05050"/>
    </source>
</evidence>
<evidence type="ECO:0000256" key="3">
    <source>
        <dbReference type="SAM" id="MobiDB-lite"/>
    </source>
</evidence>
<evidence type="ECO:0000305" key="4"/>
<name>EIS1_YEAS8</name>
<comment type="function">
    <text evidence="1">Required for normal formation of eisosomes, large cytoplasmic protein assemblies that localize to specialized domains on plasma membrane and mark the site of endocytosis.</text>
</comment>
<comment type="subcellular location">
    <subcellularLocation>
        <location evidence="1">Cytoplasmic granule</location>
    </subcellularLocation>
    <subcellularLocation>
        <location evidence="1">Cell membrane</location>
        <topology evidence="1">Peripheral membrane protein</topology>
        <orientation evidence="1">Cytoplasmic side</orientation>
    </subcellularLocation>
    <text evidence="1">Localizes at the eisosomes.</text>
</comment>
<comment type="similarity">
    <text evidence="4">Belongs to the EIS1 family.</text>
</comment>
<proteinExistence type="inferred from homology"/>
<protein>
    <recommendedName>
        <fullName>Eisosome protein 1</fullName>
    </recommendedName>
</protein>
<organism>
    <name type="scientific">Saccharomyces cerevisiae (strain Lalvin EC1118 / Prise de mousse)</name>
    <name type="common">Baker's yeast</name>
    <dbReference type="NCBI Taxonomy" id="643680"/>
    <lineage>
        <taxon>Eukaryota</taxon>
        <taxon>Fungi</taxon>
        <taxon>Dikarya</taxon>
        <taxon>Ascomycota</taxon>
        <taxon>Saccharomycotina</taxon>
        <taxon>Saccharomycetes</taxon>
        <taxon>Saccharomycetales</taxon>
        <taxon>Saccharomycetaceae</taxon>
        <taxon>Saccharomyces</taxon>
    </lineage>
</organism>
<reference key="1">
    <citation type="journal article" date="2009" name="Proc. Natl. Acad. Sci. U.S.A.">
        <title>Eukaryote-to-eukaryote gene transfer events revealed by the genome sequence of the wine yeast Saccharomyces cerevisiae EC1118.</title>
        <authorList>
            <person name="Novo M."/>
            <person name="Bigey F."/>
            <person name="Beyne E."/>
            <person name="Galeote V."/>
            <person name="Gavory F."/>
            <person name="Mallet S."/>
            <person name="Cambon B."/>
            <person name="Legras J.-L."/>
            <person name="Wincker P."/>
            <person name="Casaregola S."/>
            <person name="Dequin S."/>
        </authorList>
    </citation>
    <scope>NUCLEOTIDE SEQUENCE [LARGE SCALE GENOMIC DNA]</scope>
    <source>
        <strain>Lalvin EC1118 / Prise de mousse</strain>
    </source>
</reference>
<feature type="initiator methionine" description="Removed" evidence="2">
    <location>
        <position position="1"/>
    </location>
</feature>
<feature type="chain" id="PRO_0000410806" description="Eisosome protein 1">
    <location>
        <begin position="2"/>
        <end position="843"/>
    </location>
</feature>
<feature type="region of interest" description="Disordered" evidence="3">
    <location>
        <begin position="13"/>
        <end position="44"/>
    </location>
</feature>
<feature type="region of interest" description="Disordered" evidence="3">
    <location>
        <begin position="120"/>
        <end position="174"/>
    </location>
</feature>
<feature type="region of interest" description="Disordered" evidence="3">
    <location>
        <begin position="717"/>
        <end position="843"/>
    </location>
</feature>
<feature type="compositionally biased region" description="Basic residues" evidence="3">
    <location>
        <begin position="33"/>
        <end position="44"/>
    </location>
</feature>
<feature type="compositionally biased region" description="Polar residues" evidence="3">
    <location>
        <begin position="127"/>
        <end position="137"/>
    </location>
</feature>
<feature type="compositionally biased region" description="Polar residues" evidence="3">
    <location>
        <begin position="163"/>
        <end position="174"/>
    </location>
</feature>
<feature type="compositionally biased region" description="Low complexity" evidence="3">
    <location>
        <begin position="752"/>
        <end position="764"/>
    </location>
</feature>
<feature type="compositionally biased region" description="Basic and acidic residues" evidence="3">
    <location>
        <begin position="781"/>
        <end position="797"/>
    </location>
</feature>
<feature type="compositionally biased region" description="Polar residues" evidence="3">
    <location>
        <begin position="798"/>
        <end position="810"/>
    </location>
</feature>
<feature type="modified residue" description="N-acetylserine" evidence="2">
    <location>
        <position position="2"/>
    </location>
</feature>
<feature type="modified residue" description="Phosphoserine" evidence="2">
    <location>
        <position position="2"/>
    </location>
</feature>
<feature type="modified residue" description="Phosphoserine" evidence="2">
    <location>
        <position position="88"/>
    </location>
</feature>
<feature type="modified residue" description="Phosphoserine" evidence="2">
    <location>
        <position position="130"/>
    </location>
</feature>
<feature type="modified residue" description="Phosphoserine" evidence="2">
    <location>
        <position position="182"/>
    </location>
</feature>
<feature type="modified residue" description="Phosphoserine" evidence="2">
    <location>
        <position position="401"/>
    </location>
</feature>
<feature type="modified residue" description="Phosphoserine" evidence="2">
    <location>
        <position position="584"/>
    </location>
</feature>
<feature type="modified residue" description="Phosphoserine" evidence="2">
    <location>
        <position position="710"/>
    </location>
</feature>
<feature type="modified residue" description="Phosphothreonine" evidence="2">
    <location>
        <position position="720"/>
    </location>
</feature>
<feature type="modified residue" description="Phosphoserine" evidence="2">
    <location>
        <position position="763"/>
    </location>
</feature>
<feature type="modified residue" description="Phosphoserine" evidence="2">
    <location>
        <position position="775"/>
    </location>
</feature>
<feature type="modified residue" description="Phosphoserine" evidence="2">
    <location>
        <position position="816"/>
    </location>
</feature>
<feature type="modified residue" description="Phosphoserine" evidence="2">
    <location>
        <position position="828"/>
    </location>
</feature>
<feature type="modified residue" description="Phosphoserine" evidence="2">
    <location>
        <position position="829"/>
    </location>
</feature>
<feature type="modified residue" description="Phosphoserine" evidence="2">
    <location>
        <position position="838"/>
    </location>
</feature>
<sequence length="843" mass="93288">MSLISAVEDRDIHNIGKTSGGGSRTSSITSSKKSLKHGSKSLRKPKVYQTTGELLSREALYKAKLKYGVYQSPAQSYSIGVSDAHAASDKAANLAHDNQTTVEAYKRMFIDPNATKAASKMGPKVVRNNSITSATSKTSKESQTKRKSKESPGAAASKAYSMTMETTSLSSQTNSRSYSITSASSVLSGASGSFNSTVNPKPKTLNLEKVLVGAEKKAESRIKERWEPEKTNFQYGVKTDEHGNLNQFSFSNEMMNNIMAKVDAPKAQDLQKVKKVSAEKEAKSMKFALGAANAVKDMHPGEDIDKSIALKAQKRETYLSQLTSQQVLTLARANVDRQLDIIEKSDMHRKLFTNMEYNKAAVAVAQSNHQKKTEFHNKINMGGGLFLSPEDITKIASGLISPVLGEVSERAEAQRAMDEEIAERTEAYNKSLNEWETMERSIISNDAKVLTTTANRHQTEKKTSQEKIKASFDALVARMDTKVAERETLLEDTKSKEIEFKKQMQQELKDEKARLDQDLEEWGKKCEQDITEARKEQEELLKPYHDDLANAEAEHKTLVEERDAINAEISRLQDAIVDHKRKISGYGNDLDAQKNRNIREDDKLLELGQTKESLESHLNDDVIILANKAKEQAELSTKEARLKQLEVDSLINERKSELNATDIELKKEKLSLLEAMKDVASARGDDKIDEEKVKKLIGMTSEEYLTQNKSVEKNVEDLPTQLEKIEEGDELKKEEIVGAETKNSGGDGVPVSTAAKEATETSSAVQTKEPEEKISIGNKSSGKEDANDCKSAEHSKEISVSQKAGNNKSLGVSPDSLEHTFSGFSQGSSIEDDQDAISNQEKK</sequence>
<accession>C8ZEN7</accession>
<keyword id="KW-0007">Acetylation</keyword>
<keyword id="KW-1003">Cell membrane</keyword>
<keyword id="KW-0472">Membrane</keyword>
<keyword id="KW-0597">Phosphoprotein</keyword>
<gene>
    <name type="primary">EIS1</name>
    <name type="ORF">EC1118_1M3_1937g</name>
</gene>